<protein>
    <recommendedName>
        <fullName evidence="1">Chaperone protein DnaK</fullName>
    </recommendedName>
    <alternativeName>
        <fullName evidence="1">HSP70</fullName>
    </alternativeName>
    <alternativeName>
        <fullName evidence="1">Heat shock 70 kDa protein</fullName>
    </alternativeName>
    <alternativeName>
        <fullName evidence="1">Heat shock protein 70</fullName>
    </alternativeName>
</protein>
<reference key="1">
    <citation type="submission" date="2008-01" db="EMBL/GenBank/DDBJ databases">
        <title>Complete sequence of Pseudomonas putida GB-1.</title>
        <authorList>
            <consortium name="US DOE Joint Genome Institute"/>
            <person name="Copeland A."/>
            <person name="Lucas S."/>
            <person name="Lapidus A."/>
            <person name="Barry K."/>
            <person name="Glavina del Rio T."/>
            <person name="Dalin E."/>
            <person name="Tice H."/>
            <person name="Pitluck S."/>
            <person name="Bruce D."/>
            <person name="Goodwin L."/>
            <person name="Chertkov O."/>
            <person name="Brettin T."/>
            <person name="Detter J.C."/>
            <person name="Han C."/>
            <person name="Kuske C.R."/>
            <person name="Schmutz J."/>
            <person name="Larimer F."/>
            <person name="Land M."/>
            <person name="Hauser L."/>
            <person name="Kyrpides N."/>
            <person name="Kim E."/>
            <person name="McCarthy J.K."/>
            <person name="Richardson P."/>
        </authorList>
    </citation>
    <scope>NUCLEOTIDE SEQUENCE [LARGE SCALE GENOMIC DNA]</scope>
    <source>
        <strain>GB-1</strain>
    </source>
</reference>
<gene>
    <name evidence="1" type="primary">dnaK</name>
    <name type="ordered locus">PputGB1_4728</name>
</gene>
<accession>B0KIS5</accession>
<comment type="function">
    <text evidence="1">Acts as a chaperone.</text>
</comment>
<comment type="induction">
    <text evidence="1">By stress conditions e.g. heat shock.</text>
</comment>
<comment type="similarity">
    <text evidence="1">Belongs to the heat shock protein 70 family.</text>
</comment>
<dbReference type="EMBL" id="CP000926">
    <property type="protein sequence ID" value="ABZ00615.1"/>
    <property type="molecule type" value="Genomic_DNA"/>
</dbReference>
<dbReference type="RefSeq" id="WP_012274255.1">
    <property type="nucleotide sequence ID" value="NC_010322.1"/>
</dbReference>
<dbReference type="SMR" id="B0KIS5"/>
<dbReference type="KEGG" id="ppg:PputGB1_4728"/>
<dbReference type="eggNOG" id="COG0443">
    <property type="taxonomic scope" value="Bacteria"/>
</dbReference>
<dbReference type="HOGENOM" id="CLU_005965_2_4_6"/>
<dbReference type="Proteomes" id="UP000002157">
    <property type="component" value="Chromosome"/>
</dbReference>
<dbReference type="GO" id="GO:0005524">
    <property type="term" value="F:ATP binding"/>
    <property type="evidence" value="ECO:0007669"/>
    <property type="project" value="UniProtKB-UniRule"/>
</dbReference>
<dbReference type="GO" id="GO:0140662">
    <property type="term" value="F:ATP-dependent protein folding chaperone"/>
    <property type="evidence" value="ECO:0007669"/>
    <property type="project" value="InterPro"/>
</dbReference>
<dbReference type="GO" id="GO:0051082">
    <property type="term" value="F:unfolded protein binding"/>
    <property type="evidence" value="ECO:0007669"/>
    <property type="project" value="InterPro"/>
</dbReference>
<dbReference type="CDD" id="cd10234">
    <property type="entry name" value="ASKHA_NBD_HSP70_DnaK-like"/>
    <property type="match status" value="1"/>
</dbReference>
<dbReference type="FunFam" id="2.60.34.10:FF:000014">
    <property type="entry name" value="Chaperone protein DnaK HSP70"/>
    <property type="match status" value="1"/>
</dbReference>
<dbReference type="FunFam" id="3.30.30.30:FF:000003">
    <property type="entry name" value="Heat shock protein 9"/>
    <property type="match status" value="1"/>
</dbReference>
<dbReference type="FunFam" id="1.20.1270.10:FF:000001">
    <property type="entry name" value="Molecular chaperone DnaK"/>
    <property type="match status" value="1"/>
</dbReference>
<dbReference type="FunFam" id="3.30.420.40:FF:000004">
    <property type="entry name" value="Molecular chaperone DnaK"/>
    <property type="match status" value="1"/>
</dbReference>
<dbReference type="FunFam" id="3.90.640.10:FF:000003">
    <property type="entry name" value="Molecular chaperone DnaK"/>
    <property type="match status" value="1"/>
</dbReference>
<dbReference type="Gene3D" id="1.20.1270.10">
    <property type="match status" value="1"/>
</dbReference>
<dbReference type="Gene3D" id="3.30.420.40">
    <property type="match status" value="2"/>
</dbReference>
<dbReference type="Gene3D" id="3.90.640.10">
    <property type="entry name" value="Actin, Chain A, domain 4"/>
    <property type="match status" value="1"/>
</dbReference>
<dbReference type="Gene3D" id="2.60.34.10">
    <property type="entry name" value="Substrate Binding Domain Of DNAk, Chain A, domain 1"/>
    <property type="match status" value="1"/>
</dbReference>
<dbReference type="HAMAP" id="MF_00332">
    <property type="entry name" value="DnaK"/>
    <property type="match status" value="1"/>
</dbReference>
<dbReference type="InterPro" id="IPR043129">
    <property type="entry name" value="ATPase_NBD"/>
</dbReference>
<dbReference type="InterPro" id="IPR012725">
    <property type="entry name" value="Chaperone_DnaK"/>
</dbReference>
<dbReference type="InterPro" id="IPR018181">
    <property type="entry name" value="Heat_shock_70_CS"/>
</dbReference>
<dbReference type="InterPro" id="IPR029048">
    <property type="entry name" value="HSP70_C_sf"/>
</dbReference>
<dbReference type="InterPro" id="IPR029047">
    <property type="entry name" value="HSP70_peptide-bd_sf"/>
</dbReference>
<dbReference type="InterPro" id="IPR013126">
    <property type="entry name" value="Hsp_70_fam"/>
</dbReference>
<dbReference type="NCBIfam" id="NF001413">
    <property type="entry name" value="PRK00290.1"/>
    <property type="match status" value="1"/>
</dbReference>
<dbReference type="NCBIfam" id="TIGR02350">
    <property type="entry name" value="prok_dnaK"/>
    <property type="match status" value="1"/>
</dbReference>
<dbReference type="PANTHER" id="PTHR19375">
    <property type="entry name" value="HEAT SHOCK PROTEIN 70KDA"/>
    <property type="match status" value="1"/>
</dbReference>
<dbReference type="Pfam" id="PF00012">
    <property type="entry name" value="HSP70"/>
    <property type="match status" value="1"/>
</dbReference>
<dbReference type="PRINTS" id="PR00301">
    <property type="entry name" value="HEATSHOCK70"/>
</dbReference>
<dbReference type="SUPFAM" id="SSF53067">
    <property type="entry name" value="Actin-like ATPase domain"/>
    <property type="match status" value="2"/>
</dbReference>
<dbReference type="SUPFAM" id="SSF100934">
    <property type="entry name" value="Heat shock protein 70kD (HSP70), C-terminal subdomain"/>
    <property type="match status" value="1"/>
</dbReference>
<dbReference type="SUPFAM" id="SSF100920">
    <property type="entry name" value="Heat shock protein 70kD (HSP70), peptide-binding domain"/>
    <property type="match status" value="1"/>
</dbReference>
<dbReference type="PROSITE" id="PS00297">
    <property type="entry name" value="HSP70_1"/>
    <property type="match status" value="1"/>
</dbReference>
<dbReference type="PROSITE" id="PS00329">
    <property type="entry name" value="HSP70_2"/>
    <property type="match status" value="1"/>
</dbReference>
<dbReference type="PROSITE" id="PS01036">
    <property type="entry name" value="HSP70_3"/>
    <property type="match status" value="1"/>
</dbReference>
<name>DNAK_PSEPG</name>
<organism>
    <name type="scientific">Pseudomonas putida (strain GB-1)</name>
    <dbReference type="NCBI Taxonomy" id="76869"/>
    <lineage>
        <taxon>Bacteria</taxon>
        <taxon>Pseudomonadati</taxon>
        <taxon>Pseudomonadota</taxon>
        <taxon>Gammaproteobacteria</taxon>
        <taxon>Pseudomonadales</taxon>
        <taxon>Pseudomonadaceae</taxon>
        <taxon>Pseudomonas</taxon>
    </lineage>
</organism>
<sequence>MGKIIGIDLGTTNSCVSILENGNVKVIENAEGARTTPSIVAYANDGEILVGQSAKRQAVTNPHNTLFAVKRLIGRRFEEEVVQKDIKLVPYKIVKGGNGDAWVQAGGKDMAPPQISAEVLKKMKKTAEDYLGEPVTEAVITVPAYFNDSQRQATKDAGRIAGLDVKRIINEPTAAALAYGMDKAKGDHTVIVYDLGGGTFDVSVIEIAEVDGEHQFEVLATNGDTFLGGEDFDMRLIDYLVDEFKKESGMDLKNDPLALQRLKEAAEKAKIELSSTQSTDVNLPYITADATGPKHLNVKISRAKLESLVEDLVQRTIEPCRIALKDAGIDASKIDDVILVGGQTRMPLVQKTVADFFGKEARKDVNPDEAVAMGAAIQGAVLAGDVKDVLLLDVSPLTLGIETMGGVMTALIEKNTTIPTKKSQVFSTADDNQGAVTIHVLQGERKQAAQNKSLGKFDLADIPPAPRGVPQIEVTFDIDANGILHVGAKDKATGKAQSIVIKANSGLSDEEIERMVRDAEANAEEDRKFEELAAARNQGDALVHSTRKMVVDAGDKVTAEEKAAIEAAVVALEAAVKGDDKAAIDAKVEELSKVSAPVAQKMYAEQSAEQPQGGAQQAEPEAKHDDVVDAEFEEVKGDDKK</sequence>
<keyword id="KW-0067">ATP-binding</keyword>
<keyword id="KW-0143">Chaperone</keyword>
<keyword id="KW-0547">Nucleotide-binding</keyword>
<keyword id="KW-0597">Phosphoprotein</keyword>
<keyword id="KW-0346">Stress response</keyword>
<feature type="chain" id="PRO_1000079237" description="Chaperone protein DnaK">
    <location>
        <begin position="1"/>
        <end position="641"/>
    </location>
</feature>
<feature type="region of interest" description="Disordered" evidence="2">
    <location>
        <begin position="602"/>
        <end position="641"/>
    </location>
</feature>
<feature type="compositionally biased region" description="Low complexity" evidence="2">
    <location>
        <begin position="604"/>
        <end position="619"/>
    </location>
</feature>
<feature type="compositionally biased region" description="Basic and acidic residues" evidence="2">
    <location>
        <begin position="620"/>
        <end position="641"/>
    </location>
</feature>
<feature type="modified residue" description="Phosphothreonine; by autocatalysis" evidence="1">
    <location>
        <position position="199"/>
    </location>
</feature>
<evidence type="ECO:0000255" key="1">
    <source>
        <dbReference type="HAMAP-Rule" id="MF_00332"/>
    </source>
</evidence>
<evidence type="ECO:0000256" key="2">
    <source>
        <dbReference type="SAM" id="MobiDB-lite"/>
    </source>
</evidence>
<proteinExistence type="inferred from homology"/>